<accession>Q1PFG9</accession>
<accession>Q9XIR3</accession>
<name>DTX7_ARATH</name>
<evidence type="ECO:0000255" key="1"/>
<evidence type="ECO:0000303" key="2">
    <source>
    </source>
</evidence>
<evidence type="ECO:0000305" key="3"/>
<evidence type="ECO:0000312" key="4">
    <source>
        <dbReference type="Araport" id="AT1G64820"/>
    </source>
</evidence>
<evidence type="ECO:0000312" key="5">
    <source>
        <dbReference type="EMBL" id="AAD38256.1"/>
    </source>
</evidence>
<comment type="subcellular location">
    <subcellularLocation>
        <location evidence="1">Membrane</location>
        <topology evidence="1">Multi-pass membrane protein</topology>
    </subcellularLocation>
</comment>
<comment type="similarity">
    <text evidence="3">Belongs to the multi antimicrobial extrusion (MATE) (TC 2.A.66.1) family.</text>
</comment>
<comment type="sequence caution" evidence="3">
    <conflict type="erroneous gene model prediction">
        <sequence resource="EMBL-CDS" id="AAD38256"/>
    </conflict>
</comment>
<proteinExistence type="evidence at transcript level"/>
<reference key="1">
    <citation type="journal article" date="2000" name="Nature">
        <title>Sequence and analysis of chromosome 1 of the plant Arabidopsis thaliana.</title>
        <authorList>
            <person name="Theologis A."/>
            <person name="Ecker J.R."/>
            <person name="Palm C.J."/>
            <person name="Federspiel N.A."/>
            <person name="Kaul S."/>
            <person name="White O."/>
            <person name="Alonso J."/>
            <person name="Altafi H."/>
            <person name="Araujo R."/>
            <person name="Bowman C.L."/>
            <person name="Brooks S.Y."/>
            <person name="Buehler E."/>
            <person name="Chan A."/>
            <person name="Chao Q."/>
            <person name="Chen H."/>
            <person name="Cheuk R.F."/>
            <person name="Chin C.W."/>
            <person name="Chung M.K."/>
            <person name="Conn L."/>
            <person name="Conway A.B."/>
            <person name="Conway A.R."/>
            <person name="Creasy T.H."/>
            <person name="Dewar K."/>
            <person name="Dunn P."/>
            <person name="Etgu P."/>
            <person name="Feldblyum T.V."/>
            <person name="Feng J.-D."/>
            <person name="Fong B."/>
            <person name="Fujii C.Y."/>
            <person name="Gill J.E."/>
            <person name="Goldsmith A.D."/>
            <person name="Haas B."/>
            <person name="Hansen N.F."/>
            <person name="Hughes B."/>
            <person name="Huizar L."/>
            <person name="Hunter J.L."/>
            <person name="Jenkins J."/>
            <person name="Johnson-Hopson C."/>
            <person name="Khan S."/>
            <person name="Khaykin E."/>
            <person name="Kim C.J."/>
            <person name="Koo H.L."/>
            <person name="Kremenetskaia I."/>
            <person name="Kurtz D.B."/>
            <person name="Kwan A."/>
            <person name="Lam B."/>
            <person name="Langin-Hooper S."/>
            <person name="Lee A."/>
            <person name="Lee J.M."/>
            <person name="Lenz C.A."/>
            <person name="Li J.H."/>
            <person name="Li Y.-P."/>
            <person name="Lin X."/>
            <person name="Liu S.X."/>
            <person name="Liu Z.A."/>
            <person name="Luros J.S."/>
            <person name="Maiti R."/>
            <person name="Marziali A."/>
            <person name="Militscher J."/>
            <person name="Miranda M."/>
            <person name="Nguyen M."/>
            <person name="Nierman W.C."/>
            <person name="Osborne B.I."/>
            <person name="Pai G."/>
            <person name="Peterson J."/>
            <person name="Pham P.K."/>
            <person name="Rizzo M."/>
            <person name="Rooney T."/>
            <person name="Rowley D."/>
            <person name="Sakano H."/>
            <person name="Salzberg S.L."/>
            <person name="Schwartz J.R."/>
            <person name="Shinn P."/>
            <person name="Southwick A.M."/>
            <person name="Sun H."/>
            <person name="Tallon L.J."/>
            <person name="Tambunga G."/>
            <person name="Toriumi M.J."/>
            <person name="Town C.D."/>
            <person name="Utterback T."/>
            <person name="Van Aken S."/>
            <person name="Vaysberg M."/>
            <person name="Vysotskaia V.S."/>
            <person name="Walker M."/>
            <person name="Wu D."/>
            <person name="Yu G."/>
            <person name="Fraser C.M."/>
            <person name="Venter J.C."/>
            <person name="Davis R.W."/>
        </authorList>
    </citation>
    <scope>NUCLEOTIDE SEQUENCE [LARGE SCALE GENOMIC DNA]</scope>
    <source>
        <strain>cv. Columbia</strain>
    </source>
</reference>
<reference key="2">
    <citation type="journal article" date="2017" name="Plant J.">
        <title>Araport11: a complete reannotation of the Arabidopsis thaliana reference genome.</title>
        <authorList>
            <person name="Cheng C.Y."/>
            <person name="Krishnakumar V."/>
            <person name="Chan A.P."/>
            <person name="Thibaud-Nissen F."/>
            <person name="Schobel S."/>
            <person name="Town C.D."/>
        </authorList>
    </citation>
    <scope>GENOME REANNOTATION</scope>
    <source>
        <strain>cv. Columbia</strain>
    </source>
</reference>
<reference key="3">
    <citation type="journal article" date="2006" name="Plant Biotechnol. J.">
        <title>Simultaneous high-throughput recombinational cloning of open reading frames in closed and open configurations.</title>
        <authorList>
            <person name="Underwood B.A."/>
            <person name="Vanderhaeghen R."/>
            <person name="Whitford R."/>
            <person name="Town C.D."/>
            <person name="Hilson P."/>
        </authorList>
    </citation>
    <scope>NUCLEOTIDE SEQUENCE [LARGE SCALE MRNA]</scope>
    <source>
        <strain>cv. Columbia</strain>
    </source>
</reference>
<reference key="4">
    <citation type="journal article" date="2002" name="J. Biol. Chem.">
        <title>Functional cloning and characterization of a plant efflux carrier for multidrug and heavy metal detoxification.</title>
        <authorList>
            <person name="Li L."/>
            <person name="He Z."/>
            <person name="Pandey G.K."/>
            <person name="Tsuchiya T."/>
            <person name="Luan S."/>
        </authorList>
    </citation>
    <scope>GENE FAMILY</scope>
    <scope>NOMENCLATURE</scope>
</reference>
<reference key="5">
    <citation type="journal article" date="2003" name="Eur. J. Biochem.">
        <title>The multidrug/oligosaccharidyl-lipid/polysaccharide (MOP) exporter superfamily.</title>
        <authorList>
            <person name="Hvorup R.N."/>
            <person name="Winnen B."/>
            <person name="Chang A.B."/>
            <person name="Jiang Y."/>
            <person name="Zhou X.F."/>
            <person name="Saier M.H. Jr."/>
        </authorList>
    </citation>
    <scope>GENE FAMILY</scope>
</reference>
<dbReference type="EMBL" id="AC006193">
    <property type="protein sequence ID" value="AAD38256.1"/>
    <property type="status" value="ALT_SEQ"/>
    <property type="molecule type" value="Genomic_DNA"/>
</dbReference>
<dbReference type="EMBL" id="CP002684">
    <property type="protein sequence ID" value="AEE34294.1"/>
    <property type="molecule type" value="Genomic_DNA"/>
</dbReference>
<dbReference type="EMBL" id="DQ446394">
    <property type="protein sequence ID" value="ABE65740.1"/>
    <property type="molecule type" value="mRNA"/>
</dbReference>
<dbReference type="PIR" id="D96671">
    <property type="entry name" value="D96671"/>
</dbReference>
<dbReference type="RefSeq" id="NP_176662.1">
    <property type="nucleotide sequence ID" value="NM_105156.1"/>
</dbReference>
<dbReference type="SMR" id="Q1PFG9"/>
<dbReference type="FunCoup" id="Q1PFG9">
    <property type="interactions" value="272"/>
</dbReference>
<dbReference type="IntAct" id="Q1PFG9">
    <property type="interactions" value="12"/>
</dbReference>
<dbReference type="STRING" id="3702.Q1PFG9"/>
<dbReference type="PaxDb" id="3702-AT1G64820.1"/>
<dbReference type="EnsemblPlants" id="AT1G64820.1">
    <property type="protein sequence ID" value="AT1G64820.1"/>
    <property type="gene ID" value="AT1G64820"/>
</dbReference>
<dbReference type="GeneID" id="842790"/>
<dbReference type="Gramene" id="AT1G64820.1">
    <property type="protein sequence ID" value="AT1G64820.1"/>
    <property type="gene ID" value="AT1G64820"/>
</dbReference>
<dbReference type="KEGG" id="ath:AT1G64820"/>
<dbReference type="Araport" id="AT1G64820"/>
<dbReference type="TAIR" id="AT1G64820"/>
<dbReference type="eggNOG" id="KOG1347">
    <property type="taxonomic scope" value="Eukaryota"/>
</dbReference>
<dbReference type="HOGENOM" id="CLU_012893_1_0_1"/>
<dbReference type="InParanoid" id="Q1PFG9"/>
<dbReference type="OMA" id="AVMCCLE"/>
<dbReference type="PhylomeDB" id="Q1PFG9"/>
<dbReference type="PRO" id="PR:Q1PFG9"/>
<dbReference type="Proteomes" id="UP000006548">
    <property type="component" value="Chromosome 1"/>
</dbReference>
<dbReference type="ExpressionAtlas" id="Q1PFG9">
    <property type="expression patterns" value="baseline and differential"/>
</dbReference>
<dbReference type="GO" id="GO:0016020">
    <property type="term" value="C:membrane"/>
    <property type="evidence" value="ECO:0007669"/>
    <property type="project" value="UniProtKB-SubCell"/>
</dbReference>
<dbReference type="GO" id="GO:0015297">
    <property type="term" value="F:antiporter activity"/>
    <property type="evidence" value="ECO:0007669"/>
    <property type="project" value="InterPro"/>
</dbReference>
<dbReference type="GO" id="GO:0042910">
    <property type="term" value="F:xenobiotic transmembrane transporter activity"/>
    <property type="evidence" value="ECO:0007669"/>
    <property type="project" value="InterPro"/>
</dbReference>
<dbReference type="GO" id="GO:1990961">
    <property type="term" value="P:xenobiotic detoxification by transmembrane export across the plasma membrane"/>
    <property type="evidence" value="ECO:0007669"/>
    <property type="project" value="InterPro"/>
</dbReference>
<dbReference type="CDD" id="cd13132">
    <property type="entry name" value="MATE_eukaryotic"/>
    <property type="match status" value="1"/>
</dbReference>
<dbReference type="InterPro" id="IPR045069">
    <property type="entry name" value="MATE_euk"/>
</dbReference>
<dbReference type="InterPro" id="IPR002528">
    <property type="entry name" value="MATE_fam"/>
</dbReference>
<dbReference type="NCBIfam" id="TIGR00797">
    <property type="entry name" value="matE"/>
    <property type="match status" value="1"/>
</dbReference>
<dbReference type="PANTHER" id="PTHR11206">
    <property type="entry name" value="MULTIDRUG RESISTANCE PROTEIN"/>
    <property type="match status" value="1"/>
</dbReference>
<dbReference type="Pfam" id="PF01554">
    <property type="entry name" value="MatE"/>
    <property type="match status" value="2"/>
</dbReference>
<gene>
    <name evidence="2" type="primary">DTX7</name>
    <name evidence="4" type="ordered locus">At1g64820</name>
    <name evidence="5" type="ORF">F13O11.12</name>
</gene>
<organism>
    <name type="scientific">Arabidopsis thaliana</name>
    <name type="common">Mouse-ear cress</name>
    <dbReference type="NCBI Taxonomy" id="3702"/>
    <lineage>
        <taxon>Eukaryota</taxon>
        <taxon>Viridiplantae</taxon>
        <taxon>Streptophyta</taxon>
        <taxon>Embryophyta</taxon>
        <taxon>Tracheophyta</taxon>
        <taxon>Spermatophyta</taxon>
        <taxon>Magnoliopsida</taxon>
        <taxon>eudicotyledons</taxon>
        <taxon>Gunneridae</taxon>
        <taxon>Pentapetalae</taxon>
        <taxon>rosids</taxon>
        <taxon>malvids</taxon>
        <taxon>Brassicales</taxon>
        <taxon>Brassicaceae</taxon>
        <taxon>Camelineae</taxon>
        <taxon>Arabidopsis</taxon>
    </lineage>
</organism>
<keyword id="KW-0472">Membrane</keyword>
<keyword id="KW-1185">Reference proteome</keyword>
<keyword id="KW-0812">Transmembrane</keyword>
<keyword id="KW-1133">Transmembrane helix</keyword>
<keyword id="KW-0813">Transport</keyword>
<sequence length="502" mass="55708">METDFSLVRKEEEEEEDNRNGMSYLSMEMMKKVSSMAAPMVAVSVSQFLLQVISMVMAGHLDELSLSAVAIATSLTNVTGFSLIVGFAGALDTLCGQAFGAEQFGKIGAYTYSSMLCLLVFCFSISIVWFFMDKLLEIFHQDPLISQLACRYSIWLIPALFGFTLLQPMTRYFQSQGITLPLFVSSLGALCFHIPFCWLLVYKLKFGIVGAALSIGFSYWLNVFLLWIFMRYSALHREMKNLGLQELISSMKQFIALAIPSAMMICLEWWSFEILLLMSGLLPNSKLETSVISICLTTSAVHFVLVNAIGASASTHVSNELGAGNHRAARAAVNSAIFLGGVGALITTITLYSYRKSWGYVFSNEREVVRYATQITPILCLSIFVNSFLAVLSGVARGSGWQRIGGYASLGSYYLVGIPLGWFLCFVMKLRGKGLWIGILIASTIQLIVFALVTFFTNWEQEATKARDRVFEMTPQVKGNQKTQIIVEEDTQVLLNHIAETV</sequence>
<feature type="chain" id="PRO_0000434050" description="Protein DETOXIFICATION 7">
    <location>
        <begin position="1"/>
        <end position="502"/>
    </location>
</feature>
<feature type="transmembrane region" description="Helical" evidence="1">
    <location>
        <begin position="36"/>
        <end position="56"/>
    </location>
</feature>
<feature type="transmembrane region" description="Helical" evidence="1">
    <location>
        <begin position="68"/>
        <end position="88"/>
    </location>
</feature>
<feature type="transmembrane region" description="Helical" evidence="1">
    <location>
        <begin position="112"/>
        <end position="132"/>
    </location>
</feature>
<feature type="transmembrane region" description="Helical" evidence="1">
    <location>
        <begin position="143"/>
        <end position="163"/>
    </location>
</feature>
<feature type="transmembrane region" description="Helical" evidence="1">
    <location>
        <begin position="182"/>
        <end position="202"/>
    </location>
</feature>
<feature type="transmembrane region" description="Helical" evidence="1">
    <location>
        <begin position="208"/>
        <end position="228"/>
    </location>
</feature>
<feature type="transmembrane region" description="Helical" evidence="1">
    <location>
        <begin position="262"/>
        <end position="282"/>
    </location>
</feature>
<feature type="transmembrane region" description="Helical" evidence="1">
    <location>
        <begin position="291"/>
        <end position="311"/>
    </location>
</feature>
<feature type="transmembrane region" description="Helical" evidence="1">
    <location>
        <begin position="331"/>
        <end position="351"/>
    </location>
</feature>
<feature type="transmembrane region" description="Helical" evidence="1">
    <location>
        <begin position="375"/>
        <end position="395"/>
    </location>
</feature>
<feature type="transmembrane region" description="Helical" evidence="1">
    <location>
        <begin position="408"/>
        <end position="428"/>
    </location>
</feature>
<feature type="transmembrane region" description="Helical" evidence="1">
    <location>
        <begin position="436"/>
        <end position="456"/>
    </location>
</feature>
<protein>
    <recommendedName>
        <fullName evidence="2">Protein DETOXIFICATION 7</fullName>
        <shortName evidence="2">AtDTX7</shortName>
    </recommendedName>
    <alternativeName>
        <fullName evidence="3">Multidrug and toxic compound extrusion protein 7</fullName>
        <shortName evidence="3">MATE protein 7</shortName>
    </alternativeName>
</protein>